<comment type="function">
    <text evidence="1">Binds the lower part of the 30S subunit head. Binds mRNA in the 70S ribosome, positioning it for translation.</text>
</comment>
<comment type="subunit">
    <text evidence="1">Part of the 30S ribosomal subunit. Forms a tight complex with proteins S10 and S14.</text>
</comment>
<comment type="similarity">
    <text evidence="1">Belongs to the universal ribosomal protein uS3 family.</text>
</comment>
<dbReference type="EMBL" id="CP000542">
    <property type="protein sequence ID" value="ABM57038.1"/>
    <property type="molecule type" value="Genomic_DNA"/>
</dbReference>
<dbReference type="RefSeq" id="WP_011809048.1">
    <property type="nucleotide sequence ID" value="NC_008786.1"/>
</dbReference>
<dbReference type="SMR" id="A1WHD1"/>
<dbReference type="STRING" id="391735.Veis_1270"/>
<dbReference type="GeneID" id="76459917"/>
<dbReference type="KEGG" id="vei:Veis_1270"/>
<dbReference type="eggNOG" id="COG0092">
    <property type="taxonomic scope" value="Bacteria"/>
</dbReference>
<dbReference type="HOGENOM" id="CLU_058591_0_2_4"/>
<dbReference type="OrthoDB" id="9806396at2"/>
<dbReference type="Proteomes" id="UP000000374">
    <property type="component" value="Chromosome"/>
</dbReference>
<dbReference type="GO" id="GO:0022627">
    <property type="term" value="C:cytosolic small ribosomal subunit"/>
    <property type="evidence" value="ECO:0007669"/>
    <property type="project" value="TreeGrafter"/>
</dbReference>
<dbReference type="GO" id="GO:0003729">
    <property type="term" value="F:mRNA binding"/>
    <property type="evidence" value="ECO:0007669"/>
    <property type="project" value="UniProtKB-UniRule"/>
</dbReference>
<dbReference type="GO" id="GO:0019843">
    <property type="term" value="F:rRNA binding"/>
    <property type="evidence" value="ECO:0007669"/>
    <property type="project" value="UniProtKB-UniRule"/>
</dbReference>
<dbReference type="GO" id="GO:0003735">
    <property type="term" value="F:structural constituent of ribosome"/>
    <property type="evidence" value="ECO:0007669"/>
    <property type="project" value="InterPro"/>
</dbReference>
<dbReference type="GO" id="GO:0006412">
    <property type="term" value="P:translation"/>
    <property type="evidence" value="ECO:0007669"/>
    <property type="project" value="UniProtKB-UniRule"/>
</dbReference>
<dbReference type="CDD" id="cd02412">
    <property type="entry name" value="KH-II_30S_S3"/>
    <property type="match status" value="1"/>
</dbReference>
<dbReference type="FunFam" id="3.30.1140.32:FF:000001">
    <property type="entry name" value="30S ribosomal protein S3"/>
    <property type="match status" value="1"/>
</dbReference>
<dbReference type="FunFam" id="3.30.300.20:FF:000001">
    <property type="entry name" value="30S ribosomal protein S3"/>
    <property type="match status" value="1"/>
</dbReference>
<dbReference type="Gene3D" id="3.30.300.20">
    <property type="match status" value="1"/>
</dbReference>
<dbReference type="Gene3D" id="3.30.1140.32">
    <property type="entry name" value="Ribosomal protein S3, C-terminal domain"/>
    <property type="match status" value="1"/>
</dbReference>
<dbReference type="HAMAP" id="MF_01309_B">
    <property type="entry name" value="Ribosomal_uS3_B"/>
    <property type="match status" value="1"/>
</dbReference>
<dbReference type="InterPro" id="IPR004087">
    <property type="entry name" value="KH_dom"/>
</dbReference>
<dbReference type="InterPro" id="IPR015946">
    <property type="entry name" value="KH_dom-like_a/b"/>
</dbReference>
<dbReference type="InterPro" id="IPR004044">
    <property type="entry name" value="KH_dom_type_2"/>
</dbReference>
<dbReference type="InterPro" id="IPR009019">
    <property type="entry name" value="KH_sf_prok-type"/>
</dbReference>
<dbReference type="InterPro" id="IPR036419">
    <property type="entry name" value="Ribosomal_S3_C_sf"/>
</dbReference>
<dbReference type="InterPro" id="IPR005704">
    <property type="entry name" value="Ribosomal_uS3_bac-typ"/>
</dbReference>
<dbReference type="InterPro" id="IPR001351">
    <property type="entry name" value="Ribosomal_uS3_C"/>
</dbReference>
<dbReference type="InterPro" id="IPR018280">
    <property type="entry name" value="Ribosomal_uS3_CS"/>
</dbReference>
<dbReference type="NCBIfam" id="TIGR01009">
    <property type="entry name" value="rpsC_bact"/>
    <property type="match status" value="1"/>
</dbReference>
<dbReference type="PANTHER" id="PTHR11760">
    <property type="entry name" value="30S/40S RIBOSOMAL PROTEIN S3"/>
    <property type="match status" value="1"/>
</dbReference>
<dbReference type="PANTHER" id="PTHR11760:SF19">
    <property type="entry name" value="SMALL RIBOSOMAL SUBUNIT PROTEIN US3C"/>
    <property type="match status" value="1"/>
</dbReference>
<dbReference type="Pfam" id="PF07650">
    <property type="entry name" value="KH_2"/>
    <property type="match status" value="1"/>
</dbReference>
<dbReference type="Pfam" id="PF00189">
    <property type="entry name" value="Ribosomal_S3_C"/>
    <property type="match status" value="1"/>
</dbReference>
<dbReference type="SMART" id="SM00322">
    <property type="entry name" value="KH"/>
    <property type="match status" value="1"/>
</dbReference>
<dbReference type="SUPFAM" id="SSF54814">
    <property type="entry name" value="Prokaryotic type KH domain (KH-domain type II)"/>
    <property type="match status" value="1"/>
</dbReference>
<dbReference type="SUPFAM" id="SSF54821">
    <property type="entry name" value="Ribosomal protein S3 C-terminal domain"/>
    <property type="match status" value="1"/>
</dbReference>
<dbReference type="PROSITE" id="PS50823">
    <property type="entry name" value="KH_TYPE_2"/>
    <property type="match status" value="1"/>
</dbReference>
<dbReference type="PROSITE" id="PS00548">
    <property type="entry name" value="RIBOSOMAL_S3"/>
    <property type="match status" value="1"/>
</dbReference>
<evidence type="ECO:0000255" key="1">
    <source>
        <dbReference type="HAMAP-Rule" id="MF_01309"/>
    </source>
</evidence>
<evidence type="ECO:0000256" key="2">
    <source>
        <dbReference type="SAM" id="MobiDB-lite"/>
    </source>
</evidence>
<evidence type="ECO:0000305" key="3"/>
<sequence>MGQKIHPTGFRLAVSRNWASRWYADNRDFAGMLAEDIKVREYLKTKLKNAAVSRILIERPAKNARITIYSARPGVVIGKKGEDIESLKKELAVRLGVPVAVNIEEVRKPEIDAKLIADSITQQLEKRIMFRRAMKRAMQNAMRLGAQGIKIMSSGRLNGIEIARCEWYREGRVPLHTLRADIDYGTSEAKTTYGVIGVKVWVYKGDTLGRNDLPAVETPRPDEERRPRGPRRDGRPGGDRSGAGRGPRRPAAGNSAPADGSDKPAGAGGADNTAVKRVRKVAAPAAPAADVKGE</sequence>
<proteinExistence type="inferred from homology"/>
<keyword id="KW-1185">Reference proteome</keyword>
<keyword id="KW-0687">Ribonucleoprotein</keyword>
<keyword id="KW-0689">Ribosomal protein</keyword>
<keyword id="KW-0694">RNA-binding</keyword>
<keyword id="KW-0699">rRNA-binding</keyword>
<protein>
    <recommendedName>
        <fullName evidence="1">Small ribosomal subunit protein uS3</fullName>
    </recommendedName>
    <alternativeName>
        <fullName evidence="3">30S ribosomal protein S3</fullName>
    </alternativeName>
</protein>
<gene>
    <name evidence="1" type="primary">rpsC</name>
    <name type="ordered locus">Veis_1270</name>
</gene>
<reference key="1">
    <citation type="submission" date="2006-12" db="EMBL/GenBank/DDBJ databases">
        <title>Complete sequence of chromosome 1 of Verminephrobacter eiseniae EF01-2.</title>
        <authorList>
            <person name="Copeland A."/>
            <person name="Lucas S."/>
            <person name="Lapidus A."/>
            <person name="Barry K."/>
            <person name="Detter J.C."/>
            <person name="Glavina del Rio T."/>
            <person name="Dalin E."/>
            <person name="Tice H."/>
            <person name="Pitluck S."/>
            <person name="Chertkov O."/>
            <person name="Brettin T."/>
            <person name="Bruce D."/>
            <person name="Han C."/>
            <person name="Tapia R."/>
            <person name="Gilna P."/>
            <person name="Schmutz J."/>
            <person name="Larimer F."/>
            <person name="Land M."/>
            <person name="Hauser L."/>
            <person name="Kyrpides N."/>
            <person name="Kim E."/>
            <person name="Stahl D."/>
            <person name="Richardson P."/>
        </authorList>
    </citation>
    <scope>NUCLEOTIDE SEQUENCE [LARGE SCALE GENOMIC DNA]</scope>
    <source>
        <strain>EF01-2</strain>
    </source>
</reference>
<name>RS3_VEREI</name>
<accession>A1WHD1</accession>
<feature type="chain" id="PRO_0000293913" description="Small ribosomal subunit protein uS3">
    <location>
        <begin position="1"/>
        <end position="294"/>
    </location>
</feature>
<feature type="domain" description="KH type-2" evidence="1">
    <location>
        <begin position="39"/>
        <end position="107"/>
    </location>
</feature>
<feature type="region of interest" description="Disordered" evidence="2">
    <location>
        <begin position="210"/>
        <end position="294"/>
    </location>
</feature>
<feature type="compositionally biased region" description="Basic and acidic residues" evidence="2">
    <location>
        <begin position="219"/>
        <end position="238"/>
    </location>
</feature>
<feature type="compositionally biased region" description="Low complexity" evidence="2">
    <location>
        <begin position="249"/>
        <end position="258"/>
    </location>
</feature>
<feature type="compositionally biased region" description="Low complexity" evidence="2">
    <location>
        <begin position="281"/>
        <end position="294"/>
    </location>
</feature>
<organism>
    <name type="scientific">Verminephrobacter eiseniae (strain EF01-2)</name>
    <dbReference type="NCBI Taxonomy" id="391735"/>
    <lineage>
        <taxon>Bacteria</taxon>
        <taxon>Pseudomonadati</taxon>
        <taxon>Pseudomonadota</taxon>
        <taxon>Betaproteobacteria</taxon>
        <taxon>Burkholderiales</taxon>
        <taxon>Comamonadaceae</taxon>
        <taxon>Verminephrobacter</taxon>
    </lineage>
</organism>